<keyword id="KW-1185">Reference proteome</keyword>
<keyword id="KW-0678">Repressor</keyword>
<keyword id="KW-0346">Stress response</keyword>
<keyword id="KW-0804">Transcription</keyword>
<keyword id="KW-0805">Transcription regulation</keyword>
<comment type="function">
    <text evidence="1">Negative regulator of class I heat shock genes (grpE-dnaK-dnaJ and groELS operons). Prevents heat-shock induction of these operons.</text>
</comment>
<comment type="similarity">
    <text evidence="1">Belongs to the HrcA family.</text>
</comment>
<sequence length="343" mass="39044">MQLNERKLKILQAIIQDYIYTAEPVGSRSLSKKYDLQVSPATIRNEMADLEDMGYLIQPYTSAGRIPSDKGYRLYVDHLLQLEKNMVIQRDQIRSDLLNRFGEIEQLLQYSSKILSQLTNYTTIALAPQIKEVRLKHIQLIPMDEHHLLGIIITDTGLIKKTVLQVPEGLDAEAISKISEVINGRLQGVAIKGIPGEFTEEFTHELEQLSHGFDSVIPKMFQTLEELDKIELFLHGTTNIFNFPEFNDIFKAKSFLSMLEEKELISQLILSSSHKGMNATIGSENIYKEAKEYSLVTATYKIDEDVIGFVSIIGPTRMDYSNVMSTMGQVNKYINEVLKGKYK</sequence>
<protein>
    <recommendedName>
        <fullName evidence="1">Heat-inducible transcription repressor HrcA</fullName>
    </recommendedName>
</protein>
<accession>A6TSM2</accession>
<name>HRCA_ALKMQ</name>
<organism>
    <name type="scientific">Alkaliphilus metalliredigens (strain QYMF)</name>
    <dbReference type="NCBI Taxonomy" id="293826"/>
    <lineage>
        <taxon>Bacteria</taxon>
        <taxon>Bacillati</taxon>
        <taxon>Bacillota</taxon>
        <taxon>Clostridia</taxon>
        <taxon>Peptostreptococcales</taxon>
        <taxon>Natronincolaceae</taxon>
        <taxon>Alkaliphilus</taxon>
    </lineage>
</organism>
<dbReference type="EMBL" id="CP000724">
    <property type="protein sequence ID" value="ABR49190.1"/>
    <property type="molecule type" value="Genomic_DNA"/>
</dbReference>
<dbReference type="SMR" id="A6TSM2"/>
<dbReference type="STRING" id="293826.Amet_3050"/>
<dbReference type="KEGG" id="amt:Amet_3050"/>
<dbReference type="eggNOG" id="COG1420">
    <property type="taxonomic scope" value="Bacteria"/>
</dbReference>
<dbReference type="HOGENOM" id="CLU_050019_1_0_9"/>
<dbReference type="OrthoDB" id="9783139at2"/>
<dbReference type="Proteomes" id="UP000001572">
    <property type="component" value="Chromosome"/>
</dbReference>
<dbReference type="GO" id="GO:0003677">
    <property type="term" value="F:DNA binding"/>
    <property type="evidence" value="ECO:0007669"/>
    <property type="project" value="InterPro"/>
</dbReference>
<dbReference type="GO" id="GO:0045892">
    <property type="term" value="P:negative regulation of DNA-templated transcription"/>
    <property type="evidence" value="ECO:0007669"/>
    <property type="project" value="UniProtKB-UniRule"/>
</dbReference>
<dbReference type="FunFam" id="1.10.10.10:FF:000049">
    <property type="entry name" value="Heat-inducible transcription repressor HrcA"/>
    <property type="match status" value="1"/>
</dbReference>
<dbReference type="Gene3D" id="3.30.450.40">
    <property type="match status" value="1"/>
</dbReference>
<dbReference type="Gene3D" id="3.30.390.60">
    <property type="entry name" value="Heat-inducible transcription repressor hrca homolog, domain 3"/>
    <property type="match status" value="1"/>
</dbReference>
<dbReference type="Gene3D" id="1.10.10.10">
    <property type="entry name" value="Winged helix-like DNA-binding domain superfamily/Winged helix DNA-binding domain"/>
    <property type="match status" value="1"/>
</dbReference>
<dbReference type="HAMAP" id="MF_00081">
    <property type="entry name" value="HrcA"/>
    <property type="match status" value="1"/>
</dbReference>
<dbReference type="InterPro" id="IPR029016">
    <property type="entry name" value="GAF-like_dom_sf"/>
</dbReference>
<dbReference type="InterPro" id="IPR002571">
    <property type="entry name" value="HrcA"/>
</dbReference>
<dbReference type="InterPro" id="IPR021153">
    <property type="entry name" value="HrcA_C"/>
</dbReference>
<dbReference type="InterPro" id="IPR036388">
    <property type="entry name" value="WH-like_DNA-bd_sf"/>
</dbReference>
<dbReference type="InterPro" id="IPR036390">
    <property type="entry name" value="WH_DNA-bd_sf"/>
</dbReference>
<dbReference type="InterPro" id="IPR023120">
    <property type="entry name" value="WHTH_transcript_rep_HrcA_IDD"/>
</dbReference>
<dbReference type="NCBIfam" id="TIGR00331">
    <property type="entry name" value="hrcA"/>
    <property type="match status" value="1"/>
</dbReference>
<dbReference type="PANTHER" id="PTHR34824">
    <property type="entry name" value="HEAT-INDUCIBLE TRANSCRIPTION REPRESSOR HRCA"/>
    <property type="match status" value="1"/>
</dbReference>
<dbReference type="PANTHER" id="PTHR34824:SF1">
    <property type="entry name" value="HEAT-INDUCIBLE TRANSCRIPTION REPRESSOR HRCA"/>
    <property type="match status" value="1"/>
</dbReference>
<dbReference type="Pfam" id="PF01628">
    <property type="entry name" value="HrcA"/>
    <property type="match status" value="1"/>
</dbReference>
<dbReference type="PIRSF" id="PIRSF005485">
    <property type="entry name" value="HrcA"/>
    <property type="match status" value="1"/>
</dbReference>
<dbReference type="SUPFAM" id="SSF55781">
    <property type="entry name" value="GAF domain-like"/>
    <property type="match status" value="1"/>
</dbReference>
<dbReference type="SUPFAM" id="SSF46785">
    <property type="entry name" value="Winged helix' DNA-binding domain"/>
    <property type="match status" value="1"/>
</dbReference>
<gene>
    <name evidence="1" type="primary">hrcA</name>
    <name type="ordered locus">Amet_3050</name>
</gene>
<proteinExistence type="inferred from homology"/>
<feature type="chain" id="PRO_1000057533" description="Heat-inducible transcription repressor HrcA">
    <location>
        <begin position="1"/>
        <end position="343"/>
    </location>
</feature>
<evidence type="ECO:0000255" key="1">
    <source>
        <dbReference type="HAMAP-Rule" id="MF_00081"/>
    </source>
</evidence>
<reference key="1">
    <citation type="journal article" date="2016" name="Genome Announc.">
        <title>Complete genome sequence of Alkaliphilus metalliredigens strain QYMF, an alkaliphilic and metal-reducing bacterium isolated from borax-contaminated leachate ponds.</title>
        <authorList>
            <person name="Hwang C."/>
            <person name="Copeland A."/>
            <person name="Lucas S."/>
            <person name="Lapidus A."/>
            <person name="Barry K."/>
            <person name="Detter J.C."/>
            <person name="Glavina Del Rio T."/>
            <person name="Hammon N."/>
            <person name="Israni S."/>
            <person name="Dalin E."/>
            <person name="Tice H."/>
            <person name="Pitluck S."/>
            <person name="Chertkov O."/>
            <person name="Brettin T."/>
            <person name="Bruce D."/>
            <person name="Han C."/>
            <person name="Schmutz J."/>
            <person name="Larimer F."/>
            <person name="Land M.L."/>
            <person name="Hauser L."/>
            <person name="Kyrpides N."/>
            <person name="Mikhailova N."/>
            <person name="Ye Q."/>
            <person name="Zhou J."/>
            <person name="Richardson P."/>
            <person name="Fields M.W."/>
        </authorList>
    </citation>
    <scope>NUCLEOTIDE SEQUENCE [LARGE SCALE GENOMIC DNA]</scope>
    <source>
        <strain>QYMF</strain>
    </source>
</reference>